<comment type="catalytic activity">
    <reaction>
        <text>tRNA(His) + L-histidine + ATP = L-histidyl-tRNA(His) + AMP + diphosphate + H(+)</text>
        <dbReference type="Rhea" id="RHEA:17313"/>
        <dbReference type="Rhea" id="RHEA-COMP:9665"/>
        <dbReference type="Rhea" id="RHEA-COMP:9689"/>
        <dbReference type="ChEBI" id="CHEBI:15378"/>
        <dbReference type="ChEBI" id="CHEBI:30616"/>
        <dbReference type="ChEBI" id="CHEBI:33019"/>
        <dbReference type="ChEBI" id="CHEBI:57595"/>
        <dbReference type="ChEBI" id="CHEBI:78442"/>
        <dbReference type="ChEBI" id="CHEBI:78527"/>
        <dbReference type="ChEBI" id="CHEBI:456215"/>
        <dbReference type="EC" id="6.1.1.21"/>
    </reaction>
</comment>
<comment type="subunit">
    <text evidence="1">Homodimer.</text>
</comment>
<comment type="subcellular location">
    <subcellularLocation>
        <location evidence="1">Cytoplasm</location>
    </subcellularLocation>
</comment>
<comment type="similarity">
    <text evidence="2">Belongs to the class-II aminoacyl-tRNA synthetase family.</text>
</comment>
<name>SYH_STAAU</name>
<proteinExistence type="evidence at protein level"/>
<sequence>MIKIPRGTQDILPEDSKKWRYIENQLDELMTFYNYKEIRTPIFESTDLFARGVGDSTDVVQKEMYTFKDKGDRSITLRPEGTAAVVRSYIEHKMQGNPNQPIKLYYNGPMFRYERKQKGRYRQFNQFGVEAIGAENPSVDAEVLAMVMHIYQSFGLKHLKLVINSVGDMASRKEYNEALVKHFEPVIHEFCSDCQSRLHTNPMRILDCKVDRDKEAIKTAPRITDFLNEESKAYYEQVKAYLDDLGIPYIEDPNLVRGLDYYTHTAFELMMDNPNYDGAITTLCGGGRYNGLLELLDGPSETGIGFALSIERLLLALEEEGIELDIEENLDLFIVTMGDQADRYAVKLLNHLRHNGIKADKDYLQRKIKGQMKQADRLGAKFTIVIGDQELENNKIDVKNMTTGESETIELDALVEYFKK</sequence>
<accession>P60911</accession>
<accession>O32422</accession>
<dbReference type="EC" id="6.1.1.21"/>
<dbReference type="EMBL" id="D76414">
    <property type="protein sequence ID" value="BAA23141.1"/>
    <property type="molecule type" value="Genomic_DNA"/>
</dbReference>
<dbReference type="RefSeq" id="WP_000590826.1">
    <property type="nucleotide sequence ID" value="NZ_WYDB01000002.1"/>
</dbReference>
<dbReference type="PDB" id="1QE0">
    <property type="method" value="X-ray"/>
    <property type="resolution" value="2.70 A"/>
    <property type="chains" value="A/B=1-420"/>
</dbReference>
<dbReference type="PDBsum" id="1QE0"/>
<dbReference type="SMR" id="P60911"/>
<dbReference type="OMA" id="CGGGNFK"/>
<dbReference type="BRENDA" id="6.1.1.21">
    <property type="organism ID" value="3352"/>
</dbReference>
<dbReference type="EvolutionaryTrace" id="P60911"/>
<dbReference type="GO" id="GO:0005737">
    <property type="term" value="C:cytoplasm"/>
    <property type="evidence" value="ECO:0007669"/>
    <property type="project" value="UniProtKB-SubCell"/>
</dbReference>
<dbReference type="GO" id="GO:0005524">
    <property type="term" value="F:ATP binding"/>
    <property type="evidence" value="ECO:0007669"/>
    <property type="project" value="UniProtKB-UniRule"/>
</dbReference>
<dbReference type="GO" id="GO:0140096">
    <property type="term" value="F:catalytic activity, acting on a protein"/>
    <property type="evidence" value="ECO:0007669"/>
    <property type="project" value="UniProtKB-ARBA"/>
</dbReference>
<dbReference type="GO" id="GO:0004821">
    <property type="term" value="F:histidine-tRNA ligase activity"/>
    <property type="evidence" value="ECO:0007669"/>
    <property type="project" value="UniProtKB-UniRule"/>
</dbReference>
<dbReference type="GO" id="GO:0016740">
    <property type="term" value="F:transferase activity"/>
    <property type="evidence" value="ECO:0007669"/>
    <property type="project" value="UniProtKB-ARBA"/>
</dbReference>
<dbReference type="GO" id="GO:0006427">
    <property type="term" value="P:histidyl-tRNA aminoacylation"/>
    <property type="evidence" value="ECO:0007669"/>
    <property type="project" value="UniProtKB-UniRule"/>
</dbReference>
<dbReference type="CDD" id="cd00738">
    <property type="entry name" value="HGTP_anticodon"/>
    <property type="match status" value="1"/>
</dbReference>
<dbReference type="CDD" id="cd00773">
    <property type="entry name" value="HisRS-like_core"/>
    <property type="match status" value="1"/>
</dbReference>
<dbReference type="FunFam" id="3.30.930.10:FF:000005">
    <property type="entry name" value="Histidine--tRNA ligase"/>
    <property type="match status" value="1"/>
</dbReference>
<dbReference type="Gene3D" id="3.40.50.800">
    <property type="entry name" value="Anticodon-binding domain"/>
    <property type="match status" value="1"/>
</dbReference>
<dbReference type="Gene3D" id="3.30.930.10">
    <property type="entry name" value="Bira Bifunctional Protein, Domain 2"/>
    <property type="match status" value="1"/>
</dbReference>
<dbReference type="HAMAP" id="MF_00127">
    <property type="entry name" value="His_tRNA_synth"/>
    <property type="match status" value="1"/>
</dbReference>
<dbReference type="InterPro" id="IPR006195">
    <property type="entry name" value="aa-tRNA-synth_II"/>
</dbReference>
<dbReference type="InterPro" id="IPR045864">
    <property type="entry name" value="aa-tRNA-synth_II/BPL/LPL"/>
</dbReference>
<dbReference type="InterPro" id="IPR004154">
    <property type="entry name" value="Anticodon-bd"/>
</dbReference>
<dbReference type="InterPro" id="IPR036621">
    <property type="entry name" value="Anticodon-bd_dom_sf"/>
</dbReference>
<dbReference type="InterPro" id="IPR015807">
    <property type="entry name" value="His-tRNA-ligase"/>
</dbReference>
<dbReference type="InterPro" id="IPR041715">
    <property type="entry name" value="HisRS-like_core"/>
</dbReference>
<dbReference type="InterPro" id="IPR004516">
    <property type="entry name" value="HisRS/HisZ"/>
</dbReference>
<dbReference type="NCBIfam" id="TIGR00442">
    <property type="entry name" value="hisS"/>
    <property type="match status" value="1"/>
</dbReference>
<dbReference type="PANTHER" id="PTHR43707:SF1">
    <property type="entry name" value="HISTIDINE--TRNA LIGASE, MITOCHONDRIAL-RELATED"/>
    <property type="match status" value="1"/>
</dbReference>
<dbReference type="PANTHER" id="PTHR43707">
    <property type="entry name" value="HISTIDYL-TRNA SYNTHETASE"/>
    <property type="match status" value="1"/>
</dbReference>
<dbReference type="Pfam" id="PF03129">
    <property type="entry name" value="HGTP_anticodon"/>
    <property type="match status" value="1"/>
</dbReference>
<dbReference type="Pfam" id="PF13393">
    <property type="entry name" value="tRNA-synt_His"/>
    <property type="match status" value="1"/>
</dbReference>
<dbReference type="PIRSF" id="PIRSF001549">
    <property type="entry name" value="His-tRNA_synth"/>
    <property type="match status" value="1"/>
</dbReference>
<dbReference type="SUPFAM" id="SSF52954">
    <property type="entry name" value="Class II aaRS ABD-related"/>
    <property type="match status" value="1"/>
</dbReference>
<dbReference type="SUPFAM" id="SSF55681">
    <property type="entry name" value="Class II aaRS and biotin synthetases"/>
    <property type="match status" value="1"/>
</dbReference>
<dbReference type="PROSITE" id="PS50862">
    <property type="entry name" value="AA_TRNA_LIGASE_II"/>
    <property type="match status" value="1"/>
</dbReference>
<feature type="chain" id="PRO_0000136249" description="Histidine--tRNA ligase">
    <location>
        <begin position="1"/>
        <end position="420"/>
    </location>
</feature>
<feature type="disulfide bond">
    <location>
        <begin position="191"/>
        <end position="194"/>
    </location>
</feature>
<feature type="helix" evidence="3">
    <location>
        <begin position="13"/>
        <end position="33"/>
    </location>
</feature>
<feature type="strand" evidence="3">
    <location>
        <begin position="42"/>
        <end position="45"/>
    </location>
</feature>
<feature type="helix" evidence="3">
    <location>
        <begin position="46"/>
        <end position="49"/>
    </location>
</feature>
<feature type="strand" evidence="3">
    <location>
        <begin position="65"/>
        <end position="67"/>
    </location>
</feature>
<feature type="helix" evidence="3">
    <location>
        <begin position="69"/>
        <end position="72"/>
    </location>
</feature>
<feature type="strand" evidence="3">
    <location>
        <begin position="75"/>
        <end position="77"/>
    </location>
</feature>
<feature type="helix" evidence="3">
    <location>
        <begin position="82"/>
        <end position="91"/>
    </location>
</feature>
<feature type="helix" evidence="3">
    <location>
        <begin position="94"/>
        <end position="96"/>
    </location>
</feature>
<feature type="strand" evidence="3">
    <location>
        <begin position="101"/>
        <end position="111"/>
    </location>
</feature>
<feature type="strand" evidence="3">
    <location>
        <begin position="123"/>
        <end position="133"/>
    </location>
</feature>
<feature type="helix" evidence="3">
    <location>
        <begin position="137"/>
        <end position="153"/>
    </location>
</feature>
<feature type="strand" evidence="3">
    <location>
        <begin position="159"/>
        <end position="165"/>
    </location>
</feature>
<feature type="helix" evidence="3">
    <location>
        <begin position="169"/>
        <end position="183"/>
    </location>
</feature>
<feature type="helix" evidence="3">
    <location>
        <begin position="184"/>
        <end position="189"/>
    </location>
</feature>
<feature type="helix" evidence="3">
    <location>
        <begin position="192"/>
        <end position="196"/>
    </location>
</feature>
<feature type="turn" evidence="3">
    <location>
        <begin position="197"/>
        <end position="200"/>
    </location>
</feature>
<feature type="helix" evidence="3">
    <location>
        <begin position="202"/>
        <end position="205"/>
    </location>
</feature>
<feature type="helix" evidence="3">
    <location>
        <begin position="223"/>
        <end position="225"/>
    </location>
</feature>
<feature type="helix" evidence="3">
    <location>
        <begin position="231"/>
        <end position="245"/>
    </location>
</feature>
<feature type="strand" evidence="3">
    <location>
        <begin position="262"/>
        <end position="272"/>
    </location>
</feature>
<feature type="strand" evidence="3">
    <location>
        <begin position="279"/>
        <end position="291"/>
    </location>
</feature>
<feature type="helix" evidence="3">
    <location>
        <begin position="292"/>
        <end position="295"/>
    </location>
</feature>
<feature type="strand" evidence="3">
    <location>
        <begin position="302"/>
        <end position="309"/>
    </location>
</feature>
<feature type="helix" evidence="3">
    <location>
        <begin position="310"/>
        <end position="319"/>
    </location>
</feature>
<feature type="strand" evidence="3">
    <location>
        <begin position="331"/>
        <end position="336"/>
    </location>
</feature>
<feature type="helix" evidence="3">
    <location>
        <begin position="338"/>
        <end position="353"/>
    </location>
</feature>
<feature type="turn" evidence="3">
    <location>
        <begin position="354"/>
        <end position="356"/>
    </location>
</feature>
<feature type="strand" evidence="3">
    <location>
        <begin position="359"/>
        <end position="361"/>
    </location>
</feature>
<feature type="helix" evidence="3">
    <location>
        <begin position="368"/>
        <end position="377"/>
    </location>
</feature>
<feature type="strand" evidence="3">
    <location>
        <begin position="381"/>
        <end position="386"/>
    </location>
</feature>
<feature type="helix" evidence="3">
    <location>
        <begin position="388"/>
        <end position="393"/>
    </location>
</feature>
<feature type="strand" evidence="3">
    <location>
        <begin position="396"/>
        <end position="400"/>
    </location>
</feature>
<feature type="turn" evidence="3">
    <location>
        <begin position="401"/>
        <end position="403"/>
    </location>
</feature>
<feature type="strand" evidence="3">
    <location>
        <begin position="406"/>
        <end position="409"/>
    </location>
</feature>
<feature type="helix" evidence="3">
    <location>
        <begin position="413"/>
        <end position="419"/>
    </location>
</feature>
<keyword id="KW-0002">3D-structure</keyword>
<keyword id="KW-0030">Aminoacyl-tRNA synthetase</keyword>
<keyword id="KW-0067">ATP-binding</keyword>
<keyword id="KW-0963">Cytoplasm</keyword>
<keyword id="KW-1015">Disulfide bond</keyword>
<keyword id="KW-0436">Ligase</keyword>
<keyword id="KW-0547">Nucleotide-binding</keyword>
<keyword id="KW-0648">Protein biosynthesis</keyword>
<organism>
    <name type="scientific">Staphylococcus aureus</name>
    <dbReference type="NCBI Taxonomy" id="1280"/>
    <lineage>
        <taxon>Bacteria</taxon>
        <taxon>Bacillati</taxon>
        <taxon>Bacillota</taxon>
        <taxon>Bacilli</taxon>
        <taxon>Bacillales</taxon>
        <taxon>Staphylococcaceae</taxon>
        <taxon>Staphylococcus</taxon>
    </lineage>
</organism>
<evidence type="ECO:0000250" key="1"/>
<evidence type="ECO:0000305" key="2"/>
<evidence type="ECO:0007829" key="3">
    <source>
        <dbReference type="PDB" id="1QE0"/>
    </source>
</evidence>
<gene>
    <name type="primary">hisS</name>
</gene>
<protein>
    <recommendedName>
        <fullName>Histidine--tRNA ligase</fullName>
        <ecNumber>6.1.1.21</ecNumber>
    </recommendedName>
    <alternativeName>
        <fullName>Histidyl-tRNA synthetase</fullName>
        <shortName>HisRS</shortName>
    </alternativeName>
</protein>
<reference key="1">
    <citation type="journal article" date="1997" name="J. Bacteriol.">
        <title>Increase of methicillin resistance in Staphylococcus aureus caused by deletion of a gene whose product is homologous to lytic enzymes.</title>
        <authorList>
            <person name="Fujimura T."/>
            <person name="Murakami K."/>
        </authorList>
    </citation>
    <scope>NUCLEOTIDE SEQUENCE [GENOMIC DNA]</scope>
    <source>
        <strain>SR17238</strain>
    </source>
</reference>
<reference key="2">
    <citation type="journal article" date="1999" name="Biochemistry">
        <title>Cooperative structural dynamics and a novel fidelity mechanism in histidyl-tRNA synthetases.</title>
        <authorList>
            <person name="Qiu X."/>
            <person name="Janson C.A."/>
            <person name="Blackburn M.N."/>
            <person name="Chhohan I.K."/>
            <person name="Hibbs M."/>
            <person name="Abdel-Meguid S.S."/>
        </authorList>
    </citation>
    <scope>X-RAY CRYSTALLOGRAPHY (2.7 ANGSTROMS)</scope>
</reference>